<evidence type="ECO:0000255" key="1">
    <source>
        <dbReference type="HAMAP-Rule" id="MF_00532"/>
    </source>
</evidence>
<evidence type="ECO:0000305" key="2"/>
<organism>
    <name type="scientific">Borrelia turicatae (strain 91E135)</name>
    <dbReference type="NCBI Taxonomy" id="314724"/>
    <lineage>
        <taxon>Bacteria</taxon>
        <taxon>Pseudomonadati</taxon>
        <taxon>Spirochaetota</taxon>
        <taxon>Spirochaetia</taxon>
        <taxon>Spirochaetales</taxon>
        <taxon>Borreliaceae</taxon>
        <taxon>Borrelia</taxon>
    </lineage>
</organism>
<name>RS9_BORT9</name>
<protein>
    <recommendedName>
        <fullName evidence="1">Small ribosomal subunit protein uS9</fullName>
    </recommendedName>
    <alternativeName>
        <fullName evidence="2">30S ribosomal protein S9</fullName>
    </alternativeName>
</protein>
<gene>
    <name evidence="1" type="primary">rpsI</name>
    <name type="ordered locus">BT0338</name>
</gene>
<sequence>MAKSDVKGINLGMGTGRRKSSVARVYIREGKGDIKINNRDFDSYIQLENLKTIALSPLVLTNTLGKYDLYINIYGGGISGQAGAIRHGIARALFDLDEEYKMVLKSNGFLTRDSRKVERKKFGKKKARKSFQFSKR</sequence>
<comment type="similarity">
    <text evidence="1">Belongs to the universal ribosomal protein uS9 family.</text>
</comment>
<accession>A1QZD0</accession>
<dbReference type="EMBL" id="CP000049">
    <property type="protein sequence ID" value="AAX17672.1"/>
    <property type="molecule type" value="Genomic_DNA"/>
</dbReference>
<dbReference type="RefSeq" id="WP_011772291.1">
    <property type="nucleotide sequence ID" value="NZ_CP073176.1"/>
</dbReference>
<dbReference type="SMR" id="A1QZD0"/>
<dbReference type="KEGG" id="btu:BT0338"/>
<dbReference type="eggNOG" id="COG0103">
    <property type="taxonomic scope" value="Bacteria"/>
</dbReference>
<dbReference type="HOGENOM" id="CLU_046483_2_1_12"/>
<dbReference type="Proteomes" id="UP000001205">
    <property type="component" value="Chromosome"/>
</dbReference>
<dbReference type="GO" id="GO:0005737">
    <property type="term" value="C:cytoplasm"/>
    <property type="evidence" value="ECO:0007669"/>
    <property type="project" value="UniProtKB-ARBA"/>
</dbReference>
<dbReference type="GO" id="GO:0015935">
    <property type="term" value="C:small ribosomal subunit"/>
    <property type="evidence" value="ECO:0007669"/>
    <property type="project" value="TreeGrafter"/>
</dbReference>
<dbReference type="GO" id="GO:0003723">
    <property type="term" value="F:RNA binding"/>
    <property type="evidence" value="ECO:0007669"/>
    <property type="project" value="TreeGrafter"/>
</dbReference>
<dbReference type="GO" id="GO:0003735">
    <property type="term" value="F:structural constituent of ribosome"/>
    <property type="evidence" value="ECO:0007669"/>
    <property type="project" value="InterPro"/>
</dbReference>
<dbReference type="GO" id="GO:0006412">
    <property type="term" value="P:translation"/>
    <property type="evidence" value="ECO:0007669"/>
    <property type="project" value="UniProtKB-UniRule"/>
</dbReference>
<dbReference type="FunFam" id="3.30.230.10:FF:000001">
    <property type="entry name" value="30S ribosomal protein S9"/>
    <property type="match status" value="1"/>
</dbReference>
<dbReference type="Gene3D" id="3.30.230.10">
    <property type="match status" value="1"/>
</dbReference>
<dbReference type="HAMAP" id="MF_00532_B">
    <property type="entry name" value="Ribosomal_uS9_B"/>
    <property type="match status" value="1"/>
</dbReference>
<dbReference type="InterPro" id="IPR020568">
    <property type="entry name" value="Ribosomal_Su5_D2-typ_SF"/>
</dbReference>
<dbReference type="InterPro" id="IPR000754">
    <property type="entry name" value="Ribosomal_uS9"/>
</dbReference>
<dbReference type="InterPro" id="IPR023035">
    <property type="entry name" value="Ribosomal_uS9_bac/plastid"/>
</dbReference>
<dbReference type="InterPro" id="IPR020574">
    <property type="entry name" value="Ribosomal_uS9_CS"/>
</dbReference>
<dbReference type="InterPro" id="IPR014721">
    <property type="entry name" value="Ribsml_uS5_D2-typ_fold_subgr"/>
</dbReference>
<dbReference type="NCBIfam" id="NF001099">
    <property type="entry name" value="PRK00132.1"/>
    <property type="match status" value="1"/>
</dbReference>
<dbReference type="PANTHER" id="PTHR21569">
    <property type="entry name" value="RIBOSOMAL PROTEIN S9"/>
    <property type="match status" value="1"/>
</dbReference>
<dbReference type="PANTHER" id="PTHR21569:SF1">
    <property type="entry name" value="SMALL RIBOSOMAL SUBUNIT PROTEIN US9M"/>
    <property type="match status" value="1"/>
</dbReference>
<dbReference type="Pfam" id="PF00380">
    <property type="entry name" value="Ribosomal_S9"/>
    <property type="match status" value="1"/>
</dbReference>
<dbReference type="SUPFAM" id="SSF54211">
    <property type="entry name" value="Ribosomal protein S5 domain 2-like"/>
    <property type="match status" value="1"/>
</dbReference>
<dbReference type="PROSITE" id="PS00360">
    <property type="entry name" value="RIBOSOMAL_S9"/>
    <property type="match status" value="1"/>
</dbReference>
<reference key="1">
    <citation type="submission" date="2004-12" db="EMBL/GenBank/DDBJ databases">
        <title>The genome sequence of Borrelia hermsii and Borrelia turicatae: comparative analysis of two agents of endemic N. America relapsing fever.</title>
        <authorList>
            <person name="Porcella S.F."/>
            <person name="Raffel S.J."/>
            <person name="Schrumpf M.E."/>
            <person name="Montgomery B."/>
            <person name="Smith T."/>
            <person name="Schwan T.G."/>
        </authorList>
    </citation>
    <scope>NUCLEOTIDE SEQUENCE [LARGE SCALE GENOMIC DNA]</scope>
    <source>
        <strain>91E135</strain>
    </source>
</reference>
<feature type="chain" id="PRO_1000146436" description="Small ribosomal subunit protein uS9">
    <location>
        <begin position="1"/>
        <end position="136"/>
    </location>
</feature>
<proteinExistence type="inferred from homology"/>
<keyword id="KW-1185">Reference proteome</keyword>
<keyword id="KW-0687">Ribonucleoprotein</keyword>
<keyword id="KW-0689">Ribosomal protein</keyword>